<sequence>MTLSDDPISPSTQESSNSSYVRSKEAEKNSPSQETDEEVLKGYESYRENPSNYDNDNILIYTDTFNLYDDMFEGSLDSTRNFGAQKDPNVLVMQRLLHNSGSLIGVDMEQDGIDLATLFADSTEDSKLPYVIYEGLEMQGEGYGTNTRGPFENKIDIGSFGKSGSVMNVEREKEKIVMIPTPRFGNATPQWTIKKKLSSYDIRPRCGRLILQSSSFNEHIGRHLPKDQMIKINVGVNVNVYDYDTGTLHELRLEYQRQYGLAHGWQEDFVRRRHLKQKDEIGLLWDFSSSRLQFGVISRNTGPGLWETKD</sequence>
<accession>Q9SY12</accession>
<proteinExistence type="evidence at transcript level"/>
<feature type="chain" id="PRO_0000412851" description="B3 domain-containing protein At4g02870">
    <location>
        <begin position="1"/>
        <end position="310"/>
    </location>
</feature>
<feature type="DNA-binding region" description="TF-B3">
    <location>
        <begin position="205"/>
        <end position="300"/>
    </location>
</feature>
<feature type="region of interest" description="Disordered" evidence="2">
    <location>
        <begin position="1"/>
        <end position="39"/>
    </location>
</feature>
<feature type="compositionally biased region" description="Polar residues" evidence="2">
    <location>
        <begin position="1"/>
        <end position="21"/>
    </location>
</feature>
<dbReference type="EMBL" id="AJ534977">
    <property type="protein sequence ID" value="CAD59228.1"/>
    <property type="molecule type" value="mRNA"/>
</dbReference>
<dbReference type="EMBL" id="AC004044">
    <property type="protein sequence ID" value="AAD15342.1"/>
    <property type="molecule type" value="Genomic_DNA"/>
</dbReference>
<dbReference type="EMBL" id="AL161495">
    <property type="protein sequence ID" value="CAB77772.1"/>
    <property type="molecule type" value="Genomic_DNA"/>
</dbReference>
<dbReference type="EMBL" id="CP002687">
    <property type="protein sequence ID" value="AEE82240.1"/>
    <property type="molecule type" value="Genomic_DNA"/>
</dbReference>
<dbReference type="PIR" id="E85036">
    <property type="entry name" value="E85036"/>
</dbReference>
<dbReference type="RefSeq" id="NP_192196.1">
    <property type="nucleotide sequence ID" value="NM_116521.1"/>
</dbReference>
<dbReference type="SMR" id="Q9SY12"/>
<dbReference type="STRING" id="3702.Q9SY12"/>
<dbReference type="PaxDb" id="3702-AT4G02870.1"/>
<dbReference type="EnsemblPlants" id="AT4G02870.1">
    <property type="protein sequence ID" value="AT4G02870.1"/>
    <property type="gene ID" value="AT4G02870"/>
</dbReference>
<dbReference type="GeneID" id="828152"/>
<dbReference type="Gramene" id="AT4G02870.1">
    <property type="protein sequence ID" value="AT4G02870.1"/>
    <property type="gene ID" value="AT4G02870"/>
</dbReference>
<dbReference type="KEGG" id="ath:AT4G02870"/>
<dbReference type="Araport" id="AT4G02870"/>
<dbReference type="TAIR" id="AT4G02870"/>
<dbReference type="HOGENOM" id="CLU_898182_0_0_1"/>
<dbReference type="InParanoid" id="Q9SY12"/>
<dbReference type="OMA" id="KGYESYR"/>
<dbReference type="PhylomeDB" id="Q9SY12"/>
<dbReference type="PRO" id="PR:Q9SY12"/>
<dbReference type="Proteomes" id="UP000006548">
    <property type="component" value="Chromosome 4"/>
</dbReference>
<dbReference type="ExpressionAtlas" id="Q9SY12">
    <property type="expression patterns" value="baseline"/>
</dbReference>
<dbReference type="GO" id="GO:0005634">
    <property type="term" value="C:nucleus"/>
    <property type="evidence" value="ECO:0007669"/>
    <property type="project" value="UniProtKB-SubCell"/>
</dbReference>
<dbReference type="GO" id="GO:0003677">
    <property type="term" value="F:DNA binding"/>
    <property type="evidence" value="ECO:0007669"/>
    <property type="project" value="UniProtKB-KW"/>
</dbReference>
<dbReference type="CDD" id="cd10017">
    <property type="entry name" value="B3_DNA"/>
    <property type="match status" value="1"/>
</dbReference>
<dbReference type="FunFam" id="2.40.330.10:FF:000017">
    <property type="match status" value="1"/>
</dbReference>
<dbReference type="Gene3D" id="2.40.330.10">
    <property type="entry name" value="DNA-binding pseudobarrel domain"/>
    <property type="match status" value="1"/>
</dbReference>
<dbReference type="InterPro" id="IPR003340">
    <property type="entry name" value="B3_DNA-bd"/>
</dbReference>
<dbReference type="InterPro" id="IPR051442">
    <property type="entry name" value="B3_domain"/>
</dbReference>
<dbReference type="InterPro" id="IPR015300">
    <property type="entry name" value="DNA-bd_pseudobarrel_sf"/>
</dbReference>
<dbReference type="PANTHER" id="PTHR34269:SF11">
    <property type="entry name" value="B3 DOMAIN PROTEIN"/>
    <property type="match status" value="1"/>
</dbReference>
<dbReference type="PANTHER" id="PTHR34269">
    <property type="entry name" value="TRANSCRIPTION FACTOR B3-DOMAIN FAMILY-RELATED"/>
    <property type="match status" value="1"/>
</dbReference>
<dbReference type="SUPFAM" id="SSF101936">
    <property type="entry name" value="DNA-binding pseudobarrel domain"/>
    <property type="match status" value="1"/>
</dbReference>
<name>Y4287_ARATH</name>
<organism>
    <name type="scientific">Arabidopsis thaliana</name>
    <name type="common">Mouse-ear cress</name>
    <dbReference type="NCBI Taxonomy" id="3702"/>
    <lineage>
        <taxon>Eukaryota</taxon>
        <taxon>Viridiplantae</taxon>
        <taxon>Streptophyta</taxon>
        <taxon>Embryophyta</taxon>
        <taxon>Tracheophyta</taxon>
        <taxon>Spermatophyta</taxon>
        <taxon>Magnoliopsida</taxon>
        <taxon>eudicotyledons</taxon>
        <taxon>Gunneridae</taxon>
        <taxon>Pentapetalae</taxon>
        <taxon>rosids</taxon>
        <taxon>malvids</taxon>
        <taxon>Brassicales</taxon>
        <taxon>Brassicaceae</taxon>
        <taxon>Camelineae</taxon>
        <taxon>Arabidopsis</taxon>
    </lineage>
</organism>
<protein>
    <recommendedName>
        <fullName>B3 domain-containing protein At4g02870</fullName>
    </recommendedName>
    <alternativeName>
        <fullName>Protein AUXIN RESPONSE FACTOR 42</fullName>
    </alternativeName>
</protein>
<evidence type="ECO:0000250" key="1"/>
<evidence type="ECO:0000256" key="2">
    <source>
        <dbReference type="SAM" id="MobiDB-lite"/>
    </source>
</evidence>
<comment type="subcellular location">
    <subcellularLocation>
        <location evidence="1">Nucleus</location>
    </subcellularLocation>
</comment>
<keyword id="KW-0238">DNA-binding</keyword>
<keyword id="KW-0539">Nucleus</keyword>
<keyword id="KW-1185">Reference proteome</keyword>
<keyword id="KW-0804">Transcription</keyword>
<keyword id="KW-0805">Transcription regulation</keyword>
<reference key="1">
    <citation type="submission" date="2002-12" db="EMBL/GenBank/DDBJ databases">
        <title>Nucleotide sequence of the putative Arabidopsis ARF42.</title>
        <authorList>
            <person name="Ciarbelli A.R."/>
            <person name="Carabelli M."/>
            <person name="Ruzza V."/>
            <person name="Sessa G."/>
            <person name="Steindler C."/>
            <person name="Ruberti I."/>
        </authorList>
    </citation>
    <scope>NUCLEOTIDE SEQUENCE [MRNA]</scope>
</reference>
<reference key="2">
    <citation type="journal article" date="1999" name="Nature">
        <title>Sequence and analysis of chromosome 4 of the plant Arabidopsis thaliana.</title>
        <authorList>
            <person name="Mayer K.F.X."/>
            <person name="Schueller C."/>
            <person name="Wambutt R."/>
            <person name="Murphy G."/>
            <person name="Volckaert G."/>
            <person name="Pohl T."/>
            <person name="Duesterhoeft A."/>
            <person name="Stiekema W."/>
            <person name="Entian K.-D."/>
            <person name="Terryn N."/>
            <person name="Harris B."/>
            <person name="Ansorge W."/>
            <person name="Brandt P."/>
            <person name="Grivell L.A."/>
            <person name="Rieger M."/>
            <person name="Weichselgartner M."/>
            <person name="de Simone V."/>
            <person name="Obermaier B."/>
            <person name="Mache R."/>
            <person name="Mueller M."/>
            <person name="Kreis M."/>
            <person name="Delseny M."/>
            <person name="Puigdomenech P."/>
            <person name="Watson M."/>
            <person name="Schmidtheini T."/>
            <person name="Reichert B."/>
            <person name="Portetelle D."/>
            <person name="Perez-Alonso M."/>
            <person name="Boutry M."/>
            <person name="Bancroft I."/>
            <person name="Vos P."/>
            <person name="Hoheisel J."/>
            <person name="Zimmermann W."/>
            <person name="Wedler H."/>
            <person name="Ridley P."/>
            <person name="Langham S.-A."/>
            <person name="McCullagh B."/>
            <person name="Bilham L."/>
            <person name="Robben J."/>
            <person name="van der Schueren J."/>
            <person name="Grymonprez B."/>
            <person name="Chuang Y.-J."/>
            <person name="Vandenbussche F."/>
            <person name="Braeken M."/>
            <person name="Weltjens I."/>
            <person name="Voet M."/>
            <person name="Bastiaens I."/>
            <person name="Aert R."/>
            <person name="Defoor E."/>
            <person name="Weitzenegger T."/>
            <person name="Bothe G."/>
            <person name="Ramsperger U."/>
            <person name="Hilbert H."/>
            <person name="Braun M."/>
            <person name="Holzer E."/>
            <person name="Brandt A."/>
            <person name="Peters S."/>
            <person name="van Staveren M."/>
            <person name="Dirkse W."/>
            <person name="Mooijman P."/>
            <person name="Klein Lankhorst R."/>
            <person name="Rose M."/>
            <person name="Hauf J."/>
            <person name="Koetter P."/>
            <person name="Berneiser S."/>
            <person name="Hempel S."/>
            <person name="Feldpausch M."/>
            <person name="Lamberth S."/>
            <person name="Van den Daele H."/>
            <person name="De Keyser A."/>
            <person name="Buysshaert C."/>
            <person name="Gielen J."/>
            <person name="Villarroel R."/>
            <person name="De Clercq R."/>
            <person name="van Montagu M."/>
            <person name="Rogers J."/>
            <person name="Cronin A."/>
            <person name="Quail M.A."/>
            <person name="Bray-Allen S."/>
            <person name="Clark L."/>
            <person name="Doggett J."/>
            <person name="Hall S."/>
            <person name="Kay M."/>
            <person name="Lennard N."/>
            <person name="McLay K."/>
            <person name="Mayes R."/>
            <person name="Pettett A."/>
            <person name="Rajandream M.A."/>
            <person name="Lyne M."/>
            <person name="Benes V."/>
            <person name="Rechmann S."/>
            <person name="Borkova D."/>
            <person name="Bloecker H."/>
            <person name="Scharfe M."/>
            <person name="Grimm M."/>
            <person name="Loehnert T.-H."/>
            <person name="Dose S."/>
            <person name="de Haan M."/>
            <person name="Maarse A.C."/>
            <person name="Schaefer M."/>
            <person name="Mueller-Auer S."/>
            <person name="Gabel C."/>
            <person name="Fuchs M."/>
            <person name="Fartmann B."/>
            <person name="Granderath K."/>
            <person name="Dauner D."/>
            <person name="Herzl A."/>
            <person name="Neumann S."/>
            <person name="Argiriou A."/>
            <person name="Vitale D."/>
            <person name="Liguori R."/>
            <person name="Piravandi E."/>
            <person name="Massenet O."/>
            <person name="Quigley F."/>
            <person name="Clabauld G."/>
            <person name="Muendlein A."/>
            <person name="Felber R."/>
            <person name="Schnabl S."/>
            <person name="Hiller R."/>
            <person name="Schmidt W."/>
            <person name="Lecharny A."/>
            <person name="Aubourg S."/>
            <person name="Chefdor F."/>
            <person name="Cooke R."/>
            <person name="Berger C."/>
            <person name="Monfort A."/>
            <person name="Casacuberta E."/>
            <person name="Gibbons T."/>
            <person name="Weber N."/>
            <person name="Vandenbol M."/>
            <person name="Bargues M."/>
            <person name="Terol J."/>
            <person name="Torres A."/>
            <person name="Perez-Perez A."/>
            <person name="Purnelle B."/>
            <person name="Bent E."/>
            <person name="Johnson S."/>
            <person name="Tacon D."/>
            <person name="Jesse T."/>
            <person name="Heijnen L."/>
            <person name="Schwarz S."/>
            <person name="Scholler P."/>
            <person name="Heber S."/>
            <person name="Francs P."/>
            <person name="Bielke C."/>
            <person name="Frishman D."/>
            <person name="Haase D."/>
            <person name="Lemcke K."/>
            <person name="Mewes H.-W."/>
            <person name="Stocker S."/>
            <person name="Zaccaria P."/>
            <person name="Bevan M."/>
            <person name="Wilson R.K."/>
            <person name="de la Bastide M."/>
            <person name="Habermann K."/>
            <person name="Parnell L."/>
            <person name="Dedhia N."/>
            <person name="Gnoj L."/>
            <person name="Schutz K."/>
            <person name="Huang E."/>
            <person name="Spiegel L."/>
            <person name="Sekhon M."/>
            <person name="Murray J."/>
            <person name="Sheet P."/>
            <person name="Cordes M."/>
            <person name="Abu-Threideh J."/>
            <person name="Stoneking T."/>
            <person name="Kalicki J."/>
            <person name="Graves T."/>
            <person name="Harmon G."/>
            <person name="Edwards J."/>
            <person name="Latreille P."/>
            <person name="Courtney L."/>
            <person name="Cloud J."/>
            <person name="Abbott A."/>
            <person name="Scott K."/>
            <person name="Johnson D."/>
            <person name="Minx P."/>
            <person name="Bentley D."/>
            <person name="Fulton B."/>
            <person name="Miller N."/>
            <person name="Greco T."/>
            <person name="Kemp K."/>
            <person name="Kramer J."/>
            <person name="Fulton L."/>
            <person name="Mardis E."/>
            <person name="Dante M."/>
            <person name="Pepin K."/>
            <person name="Hillier L.W."/>
            <person name="Nelson J."/>
            <person name="Spieth J."/>
            <person name="Ryan E."/>
            <person name="Andrews S."/>
            <person name="Geisel C."/>
            <person name="Layman D."/>
            <person name="Du H."/>
            <person name="Ali J."/>
            <person name="Berghoff A."/>
            <person name="Jones K."/>
            <person name="Drone K."/>
            <person name="Cotton M."/>
            <person name="Joshu C."/>
            <person name="Antonoiu B."/>
            <person name="Zidanic M."/>
            <person name="Strong C."/>
            <person name="Sun H."/>
            <person name="Lamar B."/>
            <person name="Yordan C."/>
            <person name="Ma P."/>
            <person name="Zhong J."/>
            <person name="Preston R."/>
            <person name="Vil D."/>
            <person name="Shekher M."/>
            <person name="Matero A."/>
            <person name="Shah R."/>
            <person name="Swaby I.K."/>
            <person name="O'Shaughnessy A."/>
            <person name="Rodriguez M."/>
            <person name="Hoffman J."/>
            <person name="Till S."/>
            <person name="Granat S."/>
            <person name="Shohdy N."/>
            <person name="Hasegawa A."/>
            <person name="Hameed A."/>
            <person name="Lodhi M."/>
            <person name="Johnson A."/>
            <person name="Chen E."/>
            <person name="Marra M.A."/>
            <person name="Martienssen R."/>
            <person name="McCombie W.R."/>
        </authorList>
    </citation>
    <scope>NUCLEOTIDE SEQUENCE [LARGE SCALE GENOMIC DNA]</scope>
    <source>
        <strain>cv. Columbia</strain>
    </source>
</reference>
<reference key="3">
    <citation type="journal article" date="2017" name="Plant J.">
        <title>Araport11: a complete reannotation of the Arabidopsis thaliana reference genome.</title>
        <authorList>
            <person name="Cheng C.Y."/>
            <person name="Krishnakumar V."/>
            <person name="Chan A.P."/>
            <person name="Thibaud-Nissen F."/>
            <person name="Schobel S."/>
            <person name="Town C.D."/>
        </authorList>
    </citation>
    <scope>GENOME REANNOTATION</scope>
    <source>
        <strain>cv. Columbia</strain>
    </source>
</reference>
<reference key="4">
    <citation type="journal article" date="2008" name="Trends Plant Sci.">
        <title>The plant B3 superfamily.</title>
        <authorList>
            <person name="Swaminathan K."/>
            <person name="Peterson K."/>
            <person name="Jack T."/>
        </authorList>
    </citation>
    <scope>GENE FAMILY</scope>
</reference>
<gene>
    <name type="primary">ARF42</name>
    <name type="ordered locus">At4g02870</name>
    <name type="ORF">T5J8.19</name>
</gene>